<gene>
    <name evidence="7" type="primary">lky</name>
    <name evidence="7" type="ORF">CG17003</name>
</gene>
<dbReference type="EC" id="2.3.1.108" evidence="1"/>
<dbReference type="EMBL" id="AE014298">
    <property type="protein sequence ID" value="AAF45373.1"/>
    <property type="molecule type" value="Genomic_DNA"/>
</dbReference>
<dbReference type="EMBL" id="AY075251">
    <property type="protein sequence ID" value="AAL68118.1"/>
    <property type="molecule type" value="mRNA"/>
</dbReference>
<dbReference type="RefSeq" id="NP_608365.1">
    <property type="nucleotide sequence ID" value="NM_134521.3"/>
</dbReference>
<dbReference type="SMR" id="Q9W5X9"/>
<dbReference type="BioGRID" id="59300">
    <property type="interactions" value="6"/>
</dbReference>
<dbReference type="FunCoup" id="Q9W5X9">
    <property type="interactions" value="6"/>
</dbReference>
<dbReference type="IntAct" id="Q9W5X9">
    <property type="interactions" value="5"/>
</dbReference>
<dbReference type="STRING" id="7227.FBpp0070034"/>
<dbReference type="PaxDb" id="7227-FBpp0070034"/>
<dbReference type="DNASU" id="33006"/>
<dbReference type="EnsemblMetazoa" id="FBtr0070035">
    <property type="protein sequence ID" value="FBpp0070034"/>
    <property type="gene ID" value="FBgn0031082"/>
</dbReference>
<dbReference type="GeneID" id="33006"/>
<dbReference type="KEGG" id="dme:Dmel_CG17003"/>
<dbReference type="UCSC" id="CG17003-RA">
    <property type="organism name" value="d. melanogaster"/>
</dbReference>
<dbReference type="AGR" id="FB:FBgn0031082"/>
<dbReference type="CTD" id="33006"/>
<dbReference type="FlyBase" id="FBgn0031082">
    <property type="gene designation" value="lky"/>
</dbReference>
<dbReference type="VEuPathDB" id="VectorBase:FBgn0031082"/>
<dbReference type="eggNOG" id="KOG4601">
    <property type="taxonomic scope" value="Eukaryota"/>
</dbReference>
<dbReference type="GeneTree" id="ENSGT00390000008276"/>
<dbReference type="HOGENOM" id="CLU_025013_2_1_1"/>
<dbReference type="InParanoid" id="Q9W5X9"/>
<dbReference type="OMA" id="QGKDMDQ"/>
<dbReference type="OrthoDB" id="447510at2759"/>
<dbReference type="PhylomeDB" id="Q9W5X9"/>
<dbReference type="BioGRID-ORCS" id="33006">
    <property type="hits" value="0 hits in 1 CRISPR screen"/>
</dbReference>
<dbReference type="GenomeRNAi" id="33006"/>
<dbReference type="PRO" id="PR:Q9W5X9"/>
<dbReference type="Proteomes" id="UP000000803">
    <property type="component" value="Chromosome X"/>
</dbReference>
<dbReference type="Bgee" id="FBgn0031082">
    <property type="expression patterns" value="Expressed in mid-late elongation-stage spermatid (Drosophila) in testis and 18 other cell types or tissues"/>
</dbReference>
<dbReference type="GO" id="GO:0090543">
    <property type="term" value="C:Flemming body"/>
    <property type="evidence" value="ECO:0007669"/>
    <property type="project" value="UniProtKB-SubCell"/>
</dbReference>
<dbReference type="GO" id="GO:0045169">
    <property type="term" value="C:fusome"/>
    <property type="evidence" value="ECO:0000314"/>
    <property type="project" value="FlyBase"/>
</dbReference>
<dbReference type="GO" id="GO:0005874">
    <property type="term" value="C:microtubule"/>
    <property type="evidence" value="ECO:0007669"/>
    <property type="project" value="InterPro"/>
</dbReference>
<dbReference type="GO" id="GO:0019799">
    <property type="term" value="F:tubulin N-acetyltransferase activity"/>
    <property type="evidence" value="ECO:0000315"/>
    <property type="project" value="FlyBase"/>
</dbReference>
<dbReference type="GO" id="GO:0000226">
    <property type="term" value="P:microtubule cytoskeleton organization"/>
    <property type="evidence" value="ECO:0000318"/>
    <property type="project" value="GO_Central"/>
</dbReference>
<dbReference type="GO" id="GO:0048666">
    <property type="term" value="P:neuron development"/>
    <property type="evidence" value="ECO:0007669"/>
    <property type="project" value="UniProtKB-UniRule"/>
</dbReference>
<dbReference type="GO" id="GO:0070507">
    <property type="term" value="P:regulation of microtubule cytoskeleton organization"/>
    <property type="evidence" value="ECO:0007669"/>
    <property type="project" value="UniProtKB-UniRule"/>
</dbReference>
<dbReference type="FunFam" id="3.40.630.30:FF:000060">
    <property type="entry name" value="Alpha-tubulin N-acetyltransferase 1"/>
    <property type="match status" value="1"/>
</dbReference>
<dbReference type="Gene3D" id="3.40.630.30">
    <property type="match status" value="1"/>
</dbReference>
<dbReference type="HAMAP" id="MF_03130">
    <property type="entry name" value="mec17"/>
    <property type="match status" value="1"/>
</dbReference>
<dbReference type="InterPro" id="IPR038746">
    <property type="entry name" value="Atat"/>
</dbReference>
<dbReference type="InterPro" id="IPR007965">
    <property type="entry name" value="GNAT_ATAT"/>
</dbReference>
<dbReference type="PANTHER" id="PTHR12327">
    <property type="entry name" value="ALPHA-TUBULIN N-ACETYLTRANSFERASE 1"/>
    <property type="match status" value="1"/>
</dbReference>
<dbReference type="PANTHER" id="PTHR12327:SF0">
    <property type="entry name" value="ALPHA-TUBULIN N-ACETYLTRANSFERASE 1"/>
    <property type="match status" value="1"/>
</dbReference>
<dbReference type="Pfam" id="PF05301">
    <property type="entry name" value="Acetyltransf_16"/>
    <property type="match status" value="1"/>
</dbReference>
<dbReference type="PROSITE" id="PS51730">
    <property type="entry name" value="GNAT_ATAT"/>
    <property type="match status" value="1"/>
</dbReference>
<reference evidence="8" key="1">
    <citation type="journal article" date="2000" name="Science">
        <title>The genome sequence of Drosophila melanogaster.</title>
        <authorList>
            <person name="Adams M.D."/>
            <person name="Celniker S.E."/>
            <person name="Holt R.A."/>
            <person name="Evans C.A."/>
            <person name="Gocayne J.D."/>
            <person name="Amanatides P.G."/>
            <person name="Scherer S.E."/>
            <person name="Li P.W."/>
            <person name="Hoskins R.A."/>
            <person name="Galle R.F."/>
            <person name="George R.A."/>
            <person name="Lewis S.E."/>
            <person name="Richards S."/>
            <person name="Ashburner M."/>
            <person name="Henderson S.N."/>
            <person name="Sutton G.G."/>
            <person name="Wortman J.R."/>
            <person name="Yandell M.D."/>
            <person name="Zhang Q."/>
            <person name="Chen L.X."/>
            <person name="Brandon R.C."/>
            <person name="Rogers Y.-H.C."/>
            <person name="Blazej R.G."/>
            <person name="Champe M."/>
            <person name="Pfeiffer B.D."/>
            <person name="Wan K.H."/>
            <person name="Doyle C."/>
            <person name="Baxter E.G."/>
            <person name="Helt G."/>
            <person name="Nelson C.R."/>
            <person name="Miklos G.L.G."/>
            <person name="Abril J.F."/>
            <person name="Agbayani A."/>
            <person name="An H.-J."/>
            <person name="Andrews-Pfannkoch C."/>
            <person name="Baldwin D."/>
            <person name="Ballew R.M."/>
            <person name="Basu A."/>
            <person name="Baxendale J."/>
            <person name="Bayraktaroglu L."/>
            <person name="Beasley E.M."/>
            <person name="Beeson K.Y."/>
            <person name="Benos P.V."/>
            <person name="Berman B.P."/>
            <person name="Bhandari D."/>
            <person name="Bolshakov S."/>
            <person name="Borkova D."/>
            <person name="Botchan M.R."/>
            <person name="Bouck J."/>
            <person name="Brokstein P."/>
            <person name="Brottier P."/>
            <person name="Burtis K.C."/>
            <person name="Busam D.A."/>
            <person name="Butler H."/>
            <person name="Cadieu E."/>
            <person name="Center A."/>
            <person name="Chandra I."/>
            <person name="Cherry J.M."/>
            <person name="Cawley S."/>
            <person name="Dahlke C."/>
            <person name="Davenport L.B."/>
            <person name="Davies P."/>
            <person name="de Pablos B."/>
            <person name="Delcher A."/>
            <person name="Deng Z."/>
            <person name="Mays A.D."/>
            <person name="Dew I."/>
            <person name="Dietz S.M."/>
            <person name="Dodson K."/>
            <person name="Doup L.E."/>
            <person name="Downes M."/>
            <person name="Dugan-Rocha S."/>
            <person name="Dunkov B.C."/>
            <person name="Dunn P."/>
            <person name="Durbin K.J."/>
            <person name="Evangelista C.C."/>
            <person name="Ferraz C."/>
            <person name="Ferriera S."/>
            <person name="Fleischmann W."/>
            <person name="Fosler C."/>
            <person name="Gabrielian A.E."/>
            <person name="Garg N.S."/>
            <person name="Gelbart W.M."/>
            <person name="Glasser K."/>
            <person name="Glodek A."/>
            <person name="Gong F."/>
            <person name="Gorrell J.H."/>
            <person name="Gu Z."/>
            <person name="Guan P."/>
            <person name="Harris M."/>
            <person name="Harris N.L."/>
            <person name="Harvey D.A."/>
            <person name="Heiman T.J."/>
            <person name="Hernandez J.R."/>
            <person name="Houck J."/>
            <person name="Hostin D."/>
            <person name="Houston K.A."/>
            <person name="Howland T.J."/>
            <person name="Wei M.-H."/>
            <person name="Ibegwam C."/>
            <person name="Jalali M."/>
            <person name="Kalush F."/>
            <person name="Karpen G.H."/>
            <person name="Ke Z."/>
            <person name="Kennison J.A."/>
            <person name="Ketchum K.A."/>
            <person name="Kimmel B.E."/>
            <person name="Kodira C.D."/>
            <person name="Kraft C.L."/>
            <person name="Kravitz S."/>
            <person name="Kulp D."/>
            <person name="Lai Z."/>
            <person name="Lasko P."/>
            <person name="Lei Y."/>
            <person name="Levitsky A.A."/>
            <person name="Li J.H."/>
            <person name="Li Z."/>
            <person name="Liang Y."/>
            <person name="Lin X."/>
            <person name="Liu X."/>
            <person name="Mattei B."/>
            <person name="McIntosh T.C."/>
            <person name="McLeod M.P."/>
            <person name="McPherson D."/>
            <person name="Merkulov G."/>
            <person name="Milshina N.V."/>
            <person name="Mobarry C."/>
            <person name="Morris J."/>
            <person name="Moshrefi A."/>
            <person name="Mount S.M."/>
            <person name="Moy M."/>
            <person name="Murphy B."/>
            <person name="Murphy L."/>
            <person name="Muzny D.M."/>
            <person name="Nelson D.L."/>
            <person name="Nelson D.R."/>
            <person name="Nelson K.A."/>
            <person name="Nixon K."/>
            <person name="Nusskern D.R."/>
            <person name="Pacleb J.M."/>
            <person name="Palazzolo M."/>
            <person name="Pittman G.S."/>
            <person name="Pan S."/>
            <person name="Pollard J."/>
            <person name="Puri V."/>
            <person name="Reese M.G."/>
            <person name="Reinert K."/>
            <person name="Remington K."/>
            <person name="Saunders R.D.C."/>
            <person name="Scheeler F."/>
            <person name="Shen H."/>
            <person name="Shue B.C."/>
            <person name="Siden-Kiamos I."/>
            <person name="Simpson M."/>
            <person name="Skupski M.P."/>
            <person name="Smith T.J."/>
            <person name="Spier E."/>
            <person name="Spradling A.C."/>
            <person name="Stapleton M."/>
            <person name="Strong R."/>
            <person name="Sun E."/>
            <person name="Svirskas R."/>
            <person name="Tector C."/>
            <person name="Turner R."/>
            <person name="Venter E."/>
            <person name="Wang A.H."/>
            <person name="Wang X."/>
            <person name="Wang Z.-Y."/>
            <person name="Wassarman D.A."/>
            <person name="Weinstock G.M."/>
            <person name="Weissenbach J."/>
            <person name="Williams S.M."/>
            <person name="Woodage T."/>
            <person name="Worley K.C."/>
            <person name="Wu D."/>
            <person name="Yang S."/>
            <person name="Yao Q.A."/>
            <person name="Ye J."/>
            <person name="Yeh R.-F."/>
            <person name="Zaveri J.S."/>
            <person name="Zhan M."/>
            <person name="Zhang G."/>
            <person name="Zhao Q."/>
            <person name="Zheng L."/>
            <person name="Zheng X.H."/>
            <person name="Zhong F.N."/>
            <person name="Zhong W."/>
            <person name="Zhou X."/>
            <person name="Zhu S.C."/>
            <person name="Zhu X."/>
            <person name="Smith H.O."/>
            <person name="Gibbs R.A."/>
            <person name="Myers E.W."/>
            <person name="Rubin G.M."/>
            <person name="Venter J.C."/>
        </authorList>
    </citation>
    <scope>NUCLEOTIDE SEQUENCE [LARGE SCALE GENOMIC DNA]</scope>
    <source>
        <strain evidence="8">Berkeley</strain>
    </source>
</reference>
<reference evidence="8" key="2">
    <citation type="journal article" date="2002" name="Genome Biol.">
        <title>Annotation of the Drosophila melanogaster euchromatic genome: a systematic review.</title>
        <authorList>
            <person name="Misra S."/>
            <person name="Crosby M.A."/>
            <person name="Mungall C.J."/>
            <person name="Matthews B.B."/>
            <person name="Campbell K.S."/>
            <person name="Hradecky P."/>
            <person name="Huang Y."/>
            <person name="Kaminker J.S."/>
            <person name="Millburn G.H."/>
            <person name="Prochnik S.E."/>
            <person name="Smith C.D."/>
            <person name="Tupy J.L."/>
            <person name="Whitfield E.J."/>
            <person name="Bayraktaroglu L."/>
            <person name="Berman B.P."/>
            <person name="Bettencourt B.R."/>
            <person name="Celniker S.E."/>
            <person name="de Grey A.D.N.J."/>
            <person name="Drysdale R.A."/>
            <person name="Harris N.L."/>
            <person name="Richter J."/>
            <person name="Russo S."/>
            <person name="Schroeder A.J."/>
            <person name="Shu S.Q."/>
            <person name="Stapleton M."/>
            <person name="Yamada C."/>
            <person name="Ashburner M."/>
            <person name="Gelbart W.M."/>
            <person name="Rubin G.M."/>
            <person name="Lewis S.E."/>
        </authorList>
    </citation>
    <scope>GENOME REANNOTATION</scope>
    <source>
        <strain evidence="8">Berkeley</strain>
    </source>
</reference>
<reference evidence="6" key="3">
    <citation type="journal article" date="2002" name="Genome Biol.">
        <title>A Drosophila full-length cDNA resource.</title>
        <authorList>
            <person name="Stapleton M."/>
            <person name="Carlson J.W."/>
            <person name="Brokstein P."/>
            <person name="Yu C."/>
            <person name="Champe M."/>
            <person name="George R.A."/>
            <person name="Guarin H."/>
            <person name="Kronmiller B."/>
            <person name="Pacleb J.M."/>
            <person name="Park S."/>
            <person name="Wan K.H."/>
            <person name="Rubin G.M."/>
            <person name="Celniker S.E."/>
        </authorList>
    </citation>
    <scope>NUCLEOTIDE SEQUENCE [LARGE SCALE MRNA]</scope>
    <source>
        <strain evidence="6">Berkeley</strain>
        <tissue evidence="6">Testis</tissue>
    </source>
</reference>
<reference key="4">
    <citation type="journal article" date="2022" name="PLoS ONE">
        <title>Drosophila CG17003/leaky (lky) is required for microtubule acetylation in early germ cells in Drosophila ovary.</title>
        <authorList>
            <person name="Antel M."/>
            <person name="Simao T."/>
            <person name="Bener M.B."/>
            <person name="Inaba M."/>
        </authorList>
    </citation>
    <scope>FUNCTION</scope>
    <scope>SUBCELLULAR LOCATION</scope>
    <scope>DEVELOPMENTAL STAGE</scope>
    <scope>DISRUPTION PHENOTYPE</scope>
</reference>
<evidence type="ECO:0000255" key="1">
    <source>
        <dbReference type="HAMAP-Rule" id="MF_03130"/>
    </source>
</evidence>
<evidence type="ECO:0000269" key="2">
    <source>
    </source>
</evidence>
<evidence type="ECO:0000303" key="3">
    <source>
    </source>
</evidence>
<evidence type="ECO:0000305" key="4"/>
<evidence type="ECO:0000305" key="5">
    <source>
    </source>
</evidence>
<evidence type="ECO:0000312" key="6">
    <source>
        <dbReference type="EMBL" id="AAL68118.1"/>
    </source>
</evidence>
<evidence type="ECO:0000312" key="7">
    <source>
        <dbReference type="FlyBase" id="FBgn0031082"/>
    </source>
</evidence>
<evidence type="ECO:0000312" key="8">
    <source>
        <dbReference type="Proteomes" id="UP000000803"/>
    </source>
</evidence>
<sequence length="287" mass="32383">MVEFAFDIKHLFPQSIIRVQAHSLRPKVTQCRRYAQTERGKSTMTSCRLSEILNIMGKLSADAQGLCHAVTSADKLASDQVVYLMADKAAGHWEITGLLKVGTKDLFVFDQGGCYRRLNQTPAILDFYVHESRQRCGQGKLLFEWMLEKQGWSAHKCTVDRPSNKMLAFMAKHYGLVRTIPQGNNFVLYEGFFDDPITTCKSASGLQATGSGCRSRSQGHYVRQEQDQAQIKHGQANRNTVQNDANSGPFRQDQKIVVGTSIYRRRWKSPRTLARAGCREVSGGRRF</sequence>
<name>ATAT2_DROME</name>
<organism evidence="8">
    <name type="scientific">Drosophila melanogaster</name>
    <name type="common">Fruit fly</name>
    <dbReference type="NCBI Taxonomy" id="7227"/>
    <lineage>
        <taxon>Eukaryota</taxon>
        <taxon>Metazoa</taxon>
        <taxon>Ecdysozoa</taxon>
        <taxon>Arthropoda</taxon>
        <taxon>Hexapoda</taxon>
        <taxon>Insecta</taxon>
        <taxon>Pterygota</taxon>
        <taxon>Neoptera</taxon>
        <taxon>Endopterygota</taxon>
        <taxon>Diptera</taxon>
        <taxon>Brachycera</taxon>
        <taxon>Muscomorpha</taxon>
        <taxon>Ephydroidea</taxon>
        <taxon>Drosophilidae</taxon>
        <taxon>Drosophila</taxon>
        <taxon>Sophophora</taxon>
    </lineage>
</organism>
<accession>Q9W5X9</accession>
<accession>Q8T8W1</accession>
<comment type="function">
    <text evidence="1 2">Specifically acetylates 'Lys-40' in alpha-tubulin on the lumenal side of microtubules (PubMed:36342916). Promotes microtubule destabilization and accelerates microtubule dynamics; this activity may be independent of acetylation activity. Acetylates alpha-tubulin with a slow enzymatic rate, due to a catalytic site that is not optimized for acetyl transfer. Enters the microtubule through each end and diffuses quickly throughout the lumen of microtubules. Acetylates only long/old microtubules because of its slow acetylation rate since it does not have time to act on dynamically unstable microtubules before the enzyme is released (By similarity). Main acetyltransferase responsible for alpha-tubulin 'Lys-40' acetylation in germline cells during the early stages of oogenesis (PubMed:36342916). Required for normal egg chamber separation (PubMed:36342916).</text>
</comment>
<comment type="catalytic activity">
    <reaction evidence="1">
        <text>L-lysyl-[alpha-tubulin] + acetyl-CoA = N(6)-acetyl-L-lysyl-[alpha-tubulin] + CoA + H(+)</text>
        <dbReference type="Rhea" id="RHEA:15277"/>
        <dbReference type="Rhea" id="RHEA-COMP:11278"/>
        <dbReference type="Rhea" id="RHEA-COMP:11279"/>
        <dbReference type="ChEBI" id="CHEBI:15378"/>
        <dbReference type="ChEBI" id="CHEBI:29969"/>
        <dbReference type="ChEBI" id="CHEBI:57287"/>
        <dbReference type="ChEBI" id="CHEBI:57288"/>
        <dbReference type="ChEBI" id="CHEBI:61930"/>
        <dbReference type="EC" id="2.3.1.108"/>
    </reaction>
</comment>
<comment type="subcellular location">
    <subcellularLocation>
        <location evidence="2">Midbody</location>
        <location evidence="2">Midbody ring</location>
    </subcellularLocation>
    <text evidence="2">Localizes to fusomes in germline cells during oogenesis.</text>
</comment>
<comment type="developmental stage">
    <text evidence="2">Expressed in germline cells in region 1-2a of the germarium.</text>
</comment>
<comment type="disruption phenotype">
    <text evidence="2">Viable and fertile (PubMed:36342916). Ovaries are normal 0-7 days post eclosion but show increasing levels of incomplete egg chamber and cyst separation in older animals (PubMed:36342916). Reduced levels of alpha-tubulin acetylation in early syncytium cysts and up to stage 5 germline cysts during oogenesis, but no change in somatic cells (PubMed:36342916). Leakage of cytoplasmic material from germline cells into somatic follicular cells, possibly due to a compromised plasma membrane barrier between these cells (PubMed:36342916). This may aberrantly affect follicular cell fate, compromising egg chamber development (PubMed:36342916). Conditional RNAi-mediated knockdown in ovary germline cells, but not in somatic cells, results in incomplete egg chamber and cyst separation (PubMed:36342916).</text>
</comment>
<comment type="miscellaneous">
    <text evidence="5">In the ovaries of mutant flies lacking expression of this protein the plasma membrane barrier between germline cells and surrounding somatic follicular cells is compromised, allowing cytoplasmic material to leak from one cell into the other, thus the name leaky.</text>
</comment>
<comment type="similarity">
    <text evidence="1">Belongs to the acetyltransferase ATAT1 family.</text>
</comment>
<protein>
    <recommendedName>
        <fullName evidence="1">Alpha-tubulin N-acetyltransferase 2</fullName>
        <shortName evidence="1">Alpha-TAT 2</shortName>
        <shortName evidence="1">TAT 2</shortName>
        <ecNumber evidence="1">2.3.1.108</ecNumber>
    </recommendedName>
    <alternativeName>
        <fullName evidence="1">Acetyltransferase mec-17 homolog 2</fullName>
    </alternativeName>
    <alternativeName>
        <fullName evidence="3">Protein leaky</fullName>
    </alternativeName>
</protein>
<feature type="chain" id="PRO_0000348070" description="Alpha-tubulin N-acetyltransferase 2">
    <location>
        <begin position="1"/>
        <end position="287"/>
    </location>
</feature>
<feature type="domain" description="N-acetyltransferase" evidence="1">
    <location>
        <begin position="2"/>
        <end position="193"/>
    </location>
</feature>
<feature type="binding site" evidence="1">
    <location>
        <begin position="127"/>
        <end position="140"/>
    </location>
    <ligand>
        <name>acetyl-CoA</name>
        <dbReference type="ChEBI" id="CHEBI:57288"/>
    </ligand>
</feature>
<feature type="binding site" evidence="1">
    <location>
        <begin position="163"/>
        <end position="172"/>
    </location>
    <ligand>
        <name>acetyl-CoA</name>
        <dbReference type="ChEBI" id="CHEBI:57288"/>
    </ligand>
</feature>
<feature type="site" description="Crucial for catalytic activity" evidence="1">
    <location>
        <position position="64"/>
    </location>
</feature>
<feature type="sequence conflict" description="In Ref. 3; AAL68118." evidence="4" ref="3">
    <original>R</original>
    <variation>Q</variation>
    <location>
        <position position="216"/>
    </location>
</feature>
<proteinExistence type="evidence at transcript level"/>
<keyword id="KW-0012">Acyltransferase</keyword>
<keyword id="KW-1185">Reference proteome</keyword>
<keyword id="KW-0808">Transferase</keyword>